<dbReference type="EMBL" id="FM204883">
    <property type="protein sequence ID" value="CAW95510.1"/>
    <property type="molecule type" value="Genomic_DNA"/>
</dbReference>
<dbReference type="RefSeq" id="WP_012516439.1">
    <property type="nucleotide sequence ID" value="NC_012471.1"/>
</dbReference>
<dbReference type="SMR" id="C0MAR4"/>
<dbReference type="KEGG" id="seu:SEQ_2150"/>
<dbReference type="HOGENOM" id="CLU_162466_0_0_9"/>
<dbReference type="OrthoDB" id="9796303at2"/>
<dbReference type="Proteomes" id="UP000001365">
    <property type="component" value="Chromosome"/>
</dbReference>
<dbReference type="HAMAP" id="MF_01507">
    <property type="entry name" value="UPF0297"/>
    <property type="match status" value="1"/>
</dbReference>
<dbReference type="InterPro" id="IPR009309">
    <property type="entry name" value="IreB"/>
</dbReference>
<dbReference type="NCBIfam" id="NF003997">
    <property type="entry name" value="PRK05473.1"/>
    <property type="match status" value="1"/>
</dbReference>
<dbReference type="PANTHER" id="PTHR40067">
    <property type="entry name" value="UPF0297 PROTEIN YRZL"/>
    <property type="match status" value="1"/>
</dbReference>
<dbReference type="PANTHER" id="PTHR40067:SF1">
    <property type="entry name" value="UPF0297 PROTEIN YRZL"/>
    <property type="match status" value="1"/>
</dbReference>
<dbReference type="Pfam" id="PF06135">
    <property type="entry name" value="IreB"/>
    <property type="match status" value="1"/>
</dbReference>
<dbReference type="PIRSF" id="PIRSF037258">
    <property type="entry name" value="DUF965_bac"/>
    <property type="match status" value="1"/>
</dbReference>
<sequence length="89" mass="10363">MGFTDETVRFNLDDGDKKQISETLTAVYHSLDEKGYNPINQIVGYVLSGDPAYVPRYNDARNQIRKYERDEIVEELVRYYLQGNGIDIR</sequence>
<gene>
    <name type="ordered locus">SEQ_2150</name>
</gene>
<proteinExistence type="inferred from homology"/>
<comment type="similarity">
    <text evidence="1">Belongs to the UPF0297 family.</text>
</comment>
<protein>
    <recommendedName>
        <fullName evidence="1">UPF0297 protein SEQ_2150</fullName>
    </recommendedName>
</protein>
<organism>
    <name type="scientific">Streptococcus equi subsp. equi (strain 4047)</name>
    <dbReference type="NCBI Taxonomy" id="553482"/>
    <lineage>
        <taxon>Bacteria</taxon>
        <taxon>Bacillati</taxon>
        <taxon>Bacillota</taxon>
        <taxon>Bacilli</taxon>
        <taxon>Lactobacillales</taxon>
        <taxon>Streptococcaceae</taxon>
        <taxon>Streptococcus</taxon>
    </lineage>
</organism>
<evidence type="ECO:0000255" key="1">
    <source>
        <dbReference type="HAMAP-Rule" id="MF_01507"/>
    </source>
</evidence>
<reference key="1">
    <citation type="journal article" date="2009" name="PLoS Pathog.">
        <title>Genomic evidence for the evolution of Streptococcus equi: host restriction, increased virulence, and genetic exchange with human pathogens.</title>
        <authorList>
            <person name="Holden M.T.G."/>
            <person name="Heather Z."/>
            <person name="Paillot R."/>
            <person name="Steward K.F."/>
            <person name="Webb K."/>
            <person name="Ainslie F."/>
            <person name="Jourdan T."/>
            <person name="Bason N.C."/>
            <person name="Holroyd N.E."/>
            <person name="Mungall K."/>
            <person name="Quail M.A."/>
            <person name="Sanders M."/>
            <person name="Simmonds M."/>
            <person name="Willey D."/>
            <person name="Brooks K."/>
            <person name="Aanensen D.M."/>
            <person name="Spratt B.G."/>
            <person name="Jolley K.A."/>
            <person name="Maiden M.C.J."/>
            <person name="Kehoe M."/>
            <person name="Chanter N."/>
            <person name="Bentley S.D."/>
            <person name="Robinson C."/>
            <person name="Maskell D.J."/>
            <person name="Parkhill J."/>
            <person name="Waller A.S."/>
        </authorList>
    </citation>
    <scope>NUCLEOTIDE SEQUENCE [LARGE SCALE GENOMIC DNA]</scope>
    <source>
        <strain>4047</strain>
    </source>
</reference>
<name>Y2150_STRE4</name>
<accession>C0MAR4</accession>
<feature type="chain" id="PRO_1000185045" description="UPF0297 protein SEQ_2150">
    <location>
        <begin position="1"/>
        <end position="89"/>
    </location>
</feature>